<name>YBEY_CLOPS</name>
<protein>
    <recommendedName>
        <fullName evidence="1">Endoribonuclease YbeY</fullName>
        <ecNumber evidence="1">3.1.-.-</ecNumber>
    </recommendedName>
</protein>
<sequence>MIFIDNRQNKFDVTEELTKKLEEVISFVLKEEKVKEDCEVSLVFVDNEEIRGINNETRGIDKTTDVLSFPMIDYPEDKVYKDVYLEHEFDKCYFDGDELILGDIVLSLERTKEQSIEFNHSFEREACYLVTHSVLHLLGYDHMEEEEKARMRGREEELLGKLNITRES</sequence>
<evidence type="ECO:0000255" key="1">
    <source>
        <dbReference type="HAMAP-Rule" id="MF_00009"/>
    </source>
</evidence>
<gene>
    <name evidence="1" type="primary">ybeY</name>
    <name type="ordered locus">CPR_1990</name>
</gene>
<dbReference type="EC" id="3.1.-.-" evidence="1"/>
<dbReference type="EMBL" id="CP000312">
    <property type="protein sequence ID" value="ABG85839.1"/>
    <property type="molecule type" value="Genomic_DNA"/>
</dbReference>
<dbReference type="RefSeq" id="WP_011592853.1">
    <property type="nucleotide sequence ID" value="NC_008262.1"/>
</dbReference>
<dbReference type="SMR" id="Q0SRF8"/>
<dbReference type="KEGG" id="cpr:CPR_1990"/>
<dbReference type="Proteomes" id="UP000001824">
    <property type="component" value="Chromosome"/>
</dbReference>
<dbReference type="GO" id="GO:0005737">
    <property type="term" value="C:cytoplasm"/>
    <property type="evidence" value="ECO:0007669"/>
    <property type="project" value="UniProtKB-SubCell"/>
</dbReference>
<dbReference type="GO" id="GO:0004222">
    <property type="term" value="F:metalloendopeptidase activity"/>
    <property type="evidence" value="ECO:0007669"/>
    <property type="project" value="InterPro"/>
</dbReference>
<dbReference type="GO" id="GO:0004521">
    <property type="term" value="F:RNA endonuclease activity"/>
    <property type="evidence" value="ECO:0007669"/>
    <property type="project" value="UniProtKB-UniRule"/>
</dbReference>
<dbReference type="GO" id="GO:0008270">
    <property type="term" value="F:zinc ion binding"/>
    <property type="evidence" value="ECO:0007669"/>
    <property type="project" value="UniProtKB-UniRule"/>
</dbReference>
<dbReference type="GO" id="GO:0006364">
    <property type="term" value="P:rRNA processing"/>
    <property type="evidence" value="ECO:0007669"/>
    <property type="project" value="UniProtKB-UniRule"/>
</dbReference>
<dbReference type="Gene3D" id="3.40.390.30">
    <property type="entry name" value="Metalloproteases ('zincins'), catalytic domain"/>
    <property type="match status" value="1"/>
</dbReference>
<dbReference type="HAMAP" id="MF_00009">
    <property type="entry name" value="Endoribonucl_YbeY"/>
    <property type="match status" value="1"/>
</dbReference>
<dbReference type="InterPro" id="IPR023091">
    <property type="entry name" value="MetalPrtase_cat_dom_sf_prd"/>
</dbReference>
<dbReference type="InterPro" id="IPR002036">
    <property type="entry name" value="YbeY"/>
</dbReference>
<dbReference type="InterPro" id="IPR020549">
    <property type="entry name" value="YbeY_CS"/>
</dbReference>
<dbReference type="NCBIfam" id="TIGR00043">
    <property type="entry name" value="rRNA maturation RNase YbeY"/>
    <property type="match status" value="1"/>
</dbReference>
<dbReference type="PANTHER" id="PTHR46986">
    <property type="entry name" value="ENDORIBONUCLEASE YBEY, CHLOROPLASTIC"/>
    <property type="match status" value="1"/>
</dbReference>
<dbReference type="PANTHER" id="PTHR46986:SF1">
    <property type="entry name" value="ENDORIBONUCLEASE YBEY, CHLOROPLASTIC"/>
    <property type="match status" value="1"/>
</dbReference>
<dbReference type="Pfam" id="PF02130">
    <property type="entry name" value="YbeY"/>
    <property type="match status" value="1"/>
</dbReference>
<dbReference type="SUPFAM" id="SSF55486">
    <property type="entry name" value="Metalloproteases ('zincins'), catalytic domain"/>
    <property type="match status" value="1"/>
</dbReference>
<dbReference type="PROSITE" id="PS01306">
    <property type="entry name" value="UPF0054"/>
    <property type="match status" value="1"/>
</dbReference>
<comment type="function">
    <text evidence="1">Single strand-specific metallo-endoribonuclease involved in late-stage 70S ribosome quality control and in maturation of the 3' terminus of the 16S rRNA.</text>
</comment>
<comment type="cofactor">
    <cofactor evidence="1">
        <name>Zn(2+)</name>
        <dbReference type="ChEBI" id="CHEBI:29105"/>
    </cofactor>
    <text evidence="1">Binds 1 zinc ion.</text>
</comment>
<comment type="subcellular location">
    <subcellularLocation>
        <location evidence="1">Cytoplasm</location>
    </subcellularLocation>
</comment>
<comment type="similarity">
    <text evidence="1">Belongs to the endoribonuclease YbeY family.</text>
</comment>
<accession>Q0SRF8</accession>
<keyword id="KW-0963">Cytoplasm</keyword>
<keyword id="KW-0255">Endonuclease</keyword>
<keyword id="KW-0378">Hydrolase</keyword>
<keyword id="KW-0479">Metal-binding</keyword>
<keyword id="KW-0540">Nuclease</keyword>
<keyword id="KW-0690">Ribosome biogenesis</keyword>
<keyword id="KW-0698">rRNA processing</keyword>
<keyword id="KW-0862">Zinc</keyword>
<feature type="chain" id="PRO_0000284191" description="Endoribonuclease YbeY">
    <location>
        <begin position="1"/>
        <end position="168"/>
    </location>
</feature>
<feature type="binding site" evidence="1">
    <location>
        <position position="132"/>
    </location>
    <ligand>
        <name>Zn(2+)</name>
        <dbReference type="ChEBI" id="CHEBI:29105"/>
        <note>catalytic</note>
    </ligand>
</feature>
<feature type="binding site" evidence="1">
    <location>
        <position position="136"/>
    </location>
    <ligand>
        <name>Zn(2+)</name>
        <dbReference type="ChEBI" id="CHEBI:29105"/>
        <note>catalytic</note>
    </ligand>
</feature>
<feature type="binding site" evidence="1">
    <location>
        <position position="142"/>
    </location>
    <ligand>
        <name>Zn(2+)</name>
        <dbReference type="ChEBI" id="CHEBI:29105"/>
        <note>catalytic</note>
    </ligand>
</feature>
<organism>
    <name type="scientific">Clostridium perfringens (strain SM101 / Type A)</name>
    <dbReference type="NCBI Taxonomy" id="289380"/>
    <lineage>
        <taxon>Bacteria</taxon>
        <taxon>Bacillati</taxon>
        <taxon>Bacillota</taxon>
        <taxon>Clostridia</taxon>
        <taxon>Eubacteriales</taxon>
        <taxon>Clostridiaceae</taxon>
        <taxon>Clostridium</taxon>
    </lineage>
</organism>
<proteinExistence type="inferred from homology"/>
<reference key="1">
    <citation type="journal article" date="2006" name="Genome Res.">
        <title>Skewed genomic variability in strains of the toxigenic bacterial pathogen, Clostridium perfringens.</title>
        <authorList>
            <person name="Myers G.S.A."/>
            <person name="Rasko D.A."/>
            <person name="Cheung J.K."/>
            <person name="Ravel J."/>
            <person name="Seshadri R."/>
            <person name="DeBoy R.T."/>
            <person name="Ren Q."/>
            <person name="Varga J."/>
            <person name="Awad M.M."/>
            <person name="Brinkac L.M."/>
            <person name="Daugherty S.C."/>
            <person name="Haft D.H."/>
            <person name="Dodson R.J."/>
            <person name="Madupu R."/>
            <person name="Nelson W.C."/>
            <person name="Rosovitz M.J."/>
            <person name="Sullivan S.A."/>
            <person name="Khouri H."/>
            <person name="Dimitrov G.I."/>
            <person name="Watkins K.L."/>
            <person name="Mulligan S."/>
            <person name="Benton J."/>
            <person name="Radune D."/>
            <person name="Fisher D.J."/>
            <person name="Atkins H.S."/>
            <person name="Hiscox T."/>
            <person name="Jost B.H."/>
            <person name="Billington S.J."/>
            <person name="Songer J.G."/>
            <person name="McClane B.A."/>
            <person name="Titball R.W."/>
            <person name="Rood J.I."/>
            <person name="Melville S.B."/>
            <person name="Paulsen I.T."/>
        </authorList>
    </citation>
    <scope>NUCLEOTIDE SEQUENCE [LARGE SCALE GENOMIC DNA]</scope>
    <source>
        <strain>SM101 / Type A</strain>
    </source>
</reference>